<organism>
    <name type="scientific">Methanococcus maripaludis (strain C5 / ATCC BAA-1333)</name>
    <dbReference type="NCBI Taxonomy" id="402880"/>
    <lineage>
        <taxon>Archaea</taxon>
        <taxon>Methanobacteriati</taxon>
        <taxon>Methanobacteriota</taxon>
        <taxon>Methanomada group</taxon>
        <taxon>Methanococci</taxon>
        <taxon>Methanococcales</taxon>
        <taxon>Methanococcaceae</taxon>
        <taxon>Methanococcus</taxon>
    </lineage>
</organism>
<gene>
    <name evidence="1" type="primary">thi4</name>
    <name type="ordered locus">MmarC5_0226</name>
</gene>
<comment type="function">
    <text evidence="1">Involved in the biosynthesis of the thiazole moiety of thiamine. Catalyzes the conversion of NAD and glycine to adenosine diphosphate 5-(2-hydroxyethyl)-4-methylthiazole-2-carboxylate (ADT), an adenylated thiazole intermediate, using free sulfide as a source of sulfur.</text>
</comment>
<comment type="catalytic activity">
    <reaction evidence="1">
        <text>hydrogen sulfide + glycine + NAD(+) = ADP-5-ethyl-4-methylthiazole-2-carboxylate + nicotinamide + 3 H2O + H(+)</text>
        <dbReference type="Rhea" id="RHEA:55704"/>
        <dbReference type="ChEBI" id="CHEBI:15377"/>
        <dbReference type="ChEBI" id="CHEBI:15378"/>
        <dbReference type="ChEBI" id="CHEBI:17154"/>
        <dbReference type="ChEBI" id="CHEBI:29919"/>
        <dbReference type="ChEBI" id="CHEBI:57305"/>
        <dbReference type="ChEBI" id="CHEBI:57540"/>
        <dbReference type="ChEBI" id="CHEBI:139151"/>
        <dbReference type="EC" id="2.4.2.59"/>
    </reaction>
</comment>
<comment type="cofactor">
    <cofactor evidence="1">
        <name>Fe(2+)</name>
        <dbReference type="ChEBI" id="CHEBI:29033"/>
    </cofactor>
</comment>
<comment type="pathway">
    <text evidence="1">Cofactor biosynthesis; thiamine diphosphate biosynthesis.</text>
</comment>
<comment type="subunit">
    <text evidence="1">Homooctamer; tetramer of dimers.</text>
</comment>
<comment type="similarity">
    <text evidence="1">Belongs to the THI4 family.</text>
</comment>
<protein>
    <recommendedName>
        <fullName evidence="1">Thiamine thiazole synthase</fullName>
        <ecNumber evidence="1">2.4.2.59</ecNumber>
    </recommendedName>
</protein>
<keyword id="KW-0408">Iron</keyword>
<keyword id="KW-0479">Metal-binding</keyword>
<keyword id="KW-0520">NAD</keyword>
<keyword id="KW-0784">Thiamine biosynthesis</keyword>
<keyword id="KW-0808">Transferase</keyword>
<evidence type="ECO:0000255" key="1">
    <source>
        <dbReference type="HAMAP-Rule" id="MF_00304"/>
    </source>
</evidence>
<feature type="chain" id="PRO_1000115610" description="Thiamine thiazole synthase">
    <location>
        <begin position="1"/>
        <end position="261"/>
    </location>
</feature>
<feature type="binding site" description="in other chain" evidence="1">
    <location>
        <position position="40"/>
    </location>
    <ligand>
        <name>NAD(+)</name>
        <dbReference type="ChEBI" id="CHEBI:57540"/>
        <note>ligand shared between two adjacent protomers</note>
    </ligand>
</feature>
<feature type="binding site" description="in other chain" evidence="1">
    <location>
        <begin position="59"/>
        <end position="60"/>
    </location>
    <ligand>
        <name>NAD(+)</name>
        <dbReference type="ChEBI" id="CHEBI:57540"/>
        <note>ligand shared between two adjacent protomers</note>
    </ligand>
</feature>
<feature type="binding site" description="in other chain" evidence="1">
    <location>
        <position position="67"/>
    </location>
    <ligand>
        <name>NAD(+)</name>
        <dbReference type="ChEBI" id="CHEBI:57540"/>
        <note>ligand shared between two adjacent protomers</note>
    </ligand>
</feature>
<feature type="binding site" description="in other chain" evidence="1">
    <location>
        <position position="133"/>
    </location>
    <ligand>
        <name>NAD(+)</name>
        <dbReference type="ChEBI" id="CHEBI:57540"/>
        <note>ligand shared between two adjacent protomers</note>
    </ligand>
</feature>
<feature type="binding site" evidence="1">
    <location>
        <begin position="159"/>
        <end position="161"/>
    </location>
    <ligand>
        <name>NAD(+)</name>
        <dbReference type="ChEBI" id="CHEBI:57540"/>
        <note>ligand shared between two adjacent protomers</note>
    </ligand>
</feature>
<feature type="binding site" evidence="1">
    <location>
        <position position="161"/>
    </location>
    <ligand>
        <name>Fe cation</name>
        <dbReference type="ChEBI" id="CHEBI:24875"/>
        <note>ligand shared between two adjacent protomers</note>
    </ligand>
</feature>
<feature type="binding site" description="in other chain" evidence="1">
    <location>
        <position position="176"/>
    </location>
    <ligand>
        <name>Fe cation</name>
        <dbReference type="ChEBI" id="CHEBI:24875"/>
        <note>ligand shared between two adjacent protomers</note>
    </ligand>
</feature>
<feature type="binding site" description="in other chain" evidence="1">
    <location>
        <position position="179"/>
    </location>
    <ligand>
        <name>NAD(+)</name>
        <dbReference type="ChEBI" id="CHEBI:57540"/>
        <note>ligand shared between two adjacent protomers</note>
    </ligand>
</feature>
<feature type="binding site" description="in other chain" evidence="1">
    <location>
        <position position="226"/>
    </location>
    <ligand>
        <name>NAD(+)</name>
        <dbReference type="ChEBI" id="CHEBI:57540"/>
        <note>ligand shared between two adjacent protomers</note>
    </ligand>
</feature>
<feature type="binding site" evidence="1">
    <location>
        <position position="236"/>
    </location>
    <ligand>
        <name>glycine</name>
        <dbReference type="ChEBI" id="CHEBI:57305"/>
    </ligand>
</feature>
<accession>A4FWG7</accession>
<sequence length="261" mass="27857">MDGKLRADEVAVTKSILKSTFNMWMDVIDVDVVIVGAGPSGLTAAKYLAQKGVKTVVLERHLSFGGGTWGGGMGFPNIVVEKPADEILREAGIKLDEVDGEDELFTADSVEVPAKLGVAAIDAGAKILTGIVVEDLILKEDKIAGVVIQSYAIEKAGLHIDPLTISAKYVIDSTGHDASAVHTLARKNKDLGIEVPGEKSMWAEKGENSLTRNTREIFPGLYVCGMAANAYHAGYRMGAIFGGMYLSGKKCAEMILEKMEK</sequence>
<name>THI4_METM5</name>
<proteinExistence type="inferred from homology"/>
<reference key="1">
    <citation type="submission" date="2007-03" db="EMBL/GenBank/DDBJ databases">
        <title>Complete sequence of chromosome of Methanococcus maripaludis C5.</title>
        <authorList>
            <consortium name="US DOE Joint Genome Institute"/>
            <person name="Copeland A."/>
            <person name="Lucas S."/>
            <person name="Lapidus A."/>
            <person name="Barry K."/>
            <person name="Glavina del Rio T."/>
            <person name="Dalin E."/>
            <person name="Tice H."/>
            <person name="Pitluck S."/>
            <person name="Chertkov O."/>
            <person name="Brettin T."/>
            <person name="Bruce D."/>
            <person name="Han C."/>
            <person name="Detter J.C."/>
            <person name="Schmutz J."/>
            <person name="Larimer F."/>
            <person name="Land M."/>
            <person name="Hauser L."/>
            <person name="Kyrpides N."/>
            <person name="Mikhailova N."/>
            <person name="Sieprawska-Lupa M."/>
            <person name="Whitman W.B."/>
            <person name="Richardson P."/>
        </authorList>
    </citation>
    <scope>NUCLEOTIDE SEQUENCE [LARGE SCALE GENOMIC DNA]</scope>
    <source>
        <strain>C5 / ATCC BAA-1333</strain>
    </source>
</reference>
<dbReference type="EC" id="2.4.2.59" evidence="1"/>
<dbReference type="EMBL" id="CP000609">
    <property type="protein sequence ID" value="ABO34542.1"/>
    <property type="molecule type" value="Genomic_DNA"/>
</dbReference>
<dbReference type="RefSeq" id="WP_011868000.1">
    <property type="nucleotide sequence ID" value="NC_009135.1"/>
</dbReference>
<dbReference type="SMR" id="A4FWG7"/>
<dbReference type="STRING" id="402880.MmarC5_0226"/>
<dbReference type="GeneID" id="4928881"/>
<dbReference type="KEGG" id="mmq:MmarC5_0226"/>
<dbReference type="eggNOG" id="arCOG00574">
    <property type="taxonomic scope" value="Archaea"/>
</dbReference>
<dbReference type="HOGENOM" id="CLU_053727_2_0_2"/>
<dbReference type="OrthoDB" id="4240at2157"/>
<dbReference type="UniPathway" id="UPA00060"/>
<dbReference type="Proteomes" id="UP000000253">
    <property type="component" value="Chromosome"/>
</dbReference>
<dbReference type="GO" id="GO:0005506">
    <property type="term" value="F:iron ion binding"/>
    <property type="evidence" value="ECO:0007669"/>
    <property type="project" value="UniProtKB-UniRule"/>
</dbReference>
<dbReference type="GO" id="GO:0016763">
    <property type="term" value="F:pentosyltransferase activity"/>
    <property type="evidence" value="ECO:0007669"/>
    <property type="project" value="UniProtKB-UniRule"/>
</dbReference>
<dbReference type="GO" id="GO:0009228">
    <property type="term" value="P:thiamine biosynthetic process"/>
    <property type="evidence" value="ECO:0007669"/>
    <property type="project" value="UniProtKB-KW"/>
</dbReference>
<dbReference type="GO" id="GO:0009229">
    <property type="term" value="P:thiamine diphosphate biosynthetic process"/>
    <property type="evidence" value="ECO:0007669"/>
    <property type="project" value="UniProtKB-UniRule"/>
</dbReference>
<dbReference type="GO" id="GO:0052837">
    <property type="term" value="P:thiazole biosynthetic process"/>
    <property type="evidence" value="ECO:0007669"/>
    <property type="project" value="UniProtKB-UniRule"/>
</dbReference>
<dbReference type="Gene3D" id="3.50.50.60">
    <property type="entry name" value="FAD/NAD(P)-binding domain"/>
    <property type="match status" value="1"/>
</dbReference>
<dbReference type="HAMAP" id="MF_00304">
    <property type="entry name" value="Thi4"/>
    <property type="match status" value="1"/>
</dbReference>
<dbReference type="InterPro" id="IPR036188">
    <property type="entry name" value="FAD/NAD-bd_sf"/>
</dbReference>
<dbReference type="InterPro" id="IPR002922">
    <property type="entry name" value="Thi4_fam"/>
</dbReference>
<dbReference type="InterPro" id="IPR022828">
    <property type="entry name" value="Thi4_prok"/>
</dbReference>
<dbReference type="NCBIfam" id="TIGR00292">
    <property type="entry name" value="sulfide-dependent adenosine diphosphate thiazole synthase"/>
    <property type="match status" value="1"/>
</dbReference>
<dbReference type="PANTHER" id="PTHR43422">
    <property type="entry name" value="THIAMINE THIAZOLE SYNTHASE"/>
    <property type="match status" value="1"/>
</dbReference>
<dbReference type="PANTHER" id="PTHR43422:SF3">
    <property type="entry name" value="THIAMINE THIAZOLE SYNTHASE"/>
    <property type="match status" value="1"/>
</dbReference>
<dbReference type="Pfam" id="PF01946">
    <property type="entry name" value="Thi4"/>
    <property type="match status" value="1"/>
</dbReference>
<dbReference type="PRINTS" id="PR00420">
    <property type="entry name" value="RNGMNOXGNASE"/>
</dbReference>
<dbReference type="SUPFAM" id="SSF51905">
    <property type="entry name" value="FAD/NAD(P)-binding domain"/>
    <property type="match status" value="1"/>
</dbReference>